<protein>
    <recommendedName>
        <fullName evidence="3">Ixodegrin-like peptide</fullName>
    </recommendedName>
    <alternativeName>
        <fullName evidence="1">Platelet aggregation inhibitor</fullName>
        <shortName evidence="1">PAI</shortName>
    </alternativeName>
    <alternativeName>
        <fullName evidence="1">Tick anti-thrombosis peptide</fullName>
    </alternativeName>
</protein>
<keyword id="KW-1015">Disulfide bond</keyword>
<keyword id="KW-1199">Hemostasis impairing toxin</keyword>
<keyword id="KW-1201">Platelet aggregation inhibiting toxin</keyword>
<keyword id="KW-1185">Reference proteome</keyword>
<keyword id="KW-0964">Secreted</keyword>
<keyword id="KW-0732">Signal</keyword>
<keyword id="KW-0800">Toxin</keyword>
<feature type="signal peptide" evidence="2">
    <location>
        <begin position="1"/>
        <end position="21"/>
    </location>
</feature>
<feature type="chain" id="PRO_5004241021" description="Ixodegrin-like peptide" evidence="3">
    <location>
        <begin position="22"/>
        <end position="60"/>
    </location>
</feature>
<feature type="short sequence motif" description="Cell attachment site" evidence="1">
    <location>
        <begin position="49"/>
        <end position="51"/>
    </location>
</feature>
<evidence type="ECO:0000250" key="1">
    <source>
        <dbReference type="UniProtKB" id="Q4PMW1"/>
    </source>
</evidence>
<evidence type="ECO:0000255" key="2"/>
<evidence type="ECO:0000305" key="3"/>
<evidence type="ECO:0000312" key="4">
    <source>
        <dbReference type="EMBL" id="AAY66637.1"/>
    </source>
</evidence>
<comment type="function">
    <text evidence="1">Tick salivary platelet aggregation inhibitor that plays an important part in the anti-hemostatic strategy of ticks. Inhibits platelet aggregation induced by ADP, thrombin and thromboxane A2 (TXA2). Blocks platelet adhesion to soluble collagen (most probably through the binding to alpha-2/beta-1 integrin (ITGA2/ITGB1)) and binds to purified glycoprotein IIb/IIIa (ITGA2B/ITGB3) in a dose-dependent manner. In vivo, reduces thrombus weight effectively in a rat arteriovenous shunt model and inhibits thrombosis in a carrageenan-induced mouse tail thrombosis model.</text>
</comment>
<comment type="subcellular location">
    <subcellularLocation>
        <location evidence="1">Secreted</location>
    </subcellularLocation>
</comment>
<comment type="tissue specificity">
    <text evidence="1">Expressed in salivary glands.</text>
</comment>
<comment type="PTM">
    <text evidence="1">Contains 3 disulfide bonds.</text>
</comment>
<comment type="similarity">
    <text evidence="3">Belongs to the ixodegrin family.</text>
</comment>
<accession>Q4PMX3</accession>
<organism>
    <name type="scientific">Ixodes scapularis</name>
    <name type="common">Black-legged tick</name>
    <name type="synonym">Deer tick</name>
    <dbReference type="NCBI Taxonomy" id="6945"/>
    <lineage>
        <taxon>Eukaryota</taxon>
        <taxon>Metazoa</taxon>
        <taxon>Ecdysozoa</taxon>
        <taxon>Arthropoda</taxon>
        <taxon>Chelicerata</taxon>
        <taxon>Arachnida</taxon>
        <taxon>Acari</taxon>
        <taxon>Parasitiformes</taxon>
        <taxon>Ixodida</taxon>
        <taxon>Ixodoidea</taxon>
        <taxon>Ixodidae</taxon>
        <taxon>Ixodinae</taxon>
        <taxon>Ixodes</taxon>
    </lineage>
</organism>
<proteinExistence type="inferred from homology"/>
<reference evidence="4" key="1">
    <citation type="submission" date="2005-05" db="EMBL/GenBank/DDBJ databases">
        <authorList>
            <person name="Tseng H.-P."/>
            <person name="Hseu T.-H."/>
            <person name="Buhler D.R."/>
            <person name="Wang W.-D."/>
            <person name="Tsai H.-L."/>
            <person name="Hu C.-H."/>
        </authorList>
    </citation>
    <scope>NUCLEOTIDE SEQUENCE [MRNA]</scope>
    <source>
        <strain>Is-all-306</strain>
        <tissue>Salivary gland</tissue>
    </source>
</reference>
<reference evidence="4" key="2">
    <citation type="journal article" date="2006" name="Insect Biochem. Mol. Biol.">
        <title>An annotated catalog of salivary gland transcripts from Ixodes scapularis ticks.</title>
        <authorList>
            <person name="Ribeiro J.M.C."/>
            <person name="Alarcon-Chaidez F."/>
            <person name="Francischetti I.M.B."/>
            <person name="Mans B.J."/>
            <person name="Mather T.N."/>
            <person name="Valenzuela J.G."/>
            <person name="Wikel S.K."/>
        </authorList>
    </citation>
    <scope>NUCLEOTIDE SEQUENCE [MRNA]</scope>
    <source>
        <strain>Is-all-306</strain>
        <tissue>Salivary gland</tissue>
    </source>
</reference>
<dbReference type="EMBL" id="DQ066000">
    <property type="protein sequence ID" value="AAY66637.1"/>
    <property type="molecule type" value="mRNA"/>
</dbReference>
<dbReference type="SMR" id="Q4PMX3"/>
<dbReference type="Proteomes" id="UP000001555">
    <property type="component" value="Unplaced"/>
</dbReference>
<dbReference type="GO" id="GO:0005576">
    <property type="term" value="C:extracellular region"/>
    <property type="evidence" value="ECO:0007669"/>
    <property type="project" value="UniProtKB-SubCell"/>
</dbReference>
<dbReference type="GO" id="GO:0090729">
    <property type="term" value="F:toxin activity"/>
    <property type="evidence" value="ECO:0007669"/>
    <property type="project" value="UniProtKB-KW"/>
</dbReference>
<sequence>MNAAFIAALLILGALTLDAMAYSFTCERIPCTNNSDCHGSDLCQCRPPRGDGFSYFCSEY</sequence>
<name>IXOL_IXOSC</name>